<keyword id="KW-0007">Acetylation</keyword>
<keyword id="KW-0025">Alternative splicing</keyword>
<keyword id="KW-0479">Metal-binding</keyword>
<keyword id="KW-1267">Proteomics identification</keyword>
<keyword id="KW-1185">Reference proteome</keyword>
<keyword id="KW-0677">Repeat</keyword>
<keyword id="KW-0862">Zinc</keyword>
<keyword id="KW-0863">Zinc-finger</keyword>
<evidence type="ECO:0000250" key="1"/>
<evidence type="ECO:0000255" key="2">
    <source>
        <dbReference type="PROSITE-ProRule" id="PRU00288"/>
    </source>
</evidence>
<evidence type="ECO:0000256" key="3">
    <source>
        <dbReference type="SAM" id="MobiDB-lite"/>
    </source>
</evidence>
<evidence type="ECO:0000303" key="4">
    <source>
    </source>
</evidence>
<evidence type="ECO:0000305" key="5"/>
<evidence type="ECO:0007744" key="6">
    <source>
    </source>
</evidence>
<reference key="1">
    <citation type="journal article" date="1997" name="Genes Dev.">
        <title>Binding specificity and in vivo targets of the EH domain, a novel protein-protein interaction module.</title>
        <authorList>
            <person name="Salcini A.E."/>
            <person name="Confalonieri S."/>
            <person name="Doria M."/>
            <person name="Santolini E."/>
            <person name="Tassi E."/>
            <person name="Minenkova O."/>
            <person name="Cesareni G."/>
            <person name="Pelicci P.G."/>
            <person name="Di Fiore P.P."/>
        </authorList>
    </citation>
    <scope>NUCLEOTIDE SEQUENCE [MRNA] (ISOFORM 1)</scope>
</reference>
<reference key="2">
    <citation type="journal article" date="2004" name="Genome Res.">
        <title>The status, quality, and expansion of the NIH full-length cDNA project: the Mammalian Gene Collection (MGC).</title>
        <authorList>
            <consortium name="The MGC Project Team"/>
        </authorList>
    </citation>
    <scope>NUCLEOTIDE SEQUENCE [LARGE SCALE MRNA] (ISOFORMS 1 AND 2)</scope>
    <source>
        <tissue>Brain</tissue>
        <tissue>Placenta</tissue>
    </source>
</reference>
<reference key="3">
    <citation type="journal article" date="1998" name="Genome Res.">
        <title>Large-scale sequencing of two regions in human chromosome 7q22: analysis of 650 kb of genomic sequence around the EPO and CUTL1 loci reveals 17 genes.</title>
        <authorList>
            <person name="Gloeckner G."/>
            <person name="Scherer S."/>
            <person name="Schattevoy R."/>
            <person name="Boright A.P."/>
            <person name="Weber J."/>
            <person name="Tsui L.-C."/>
            <person name="Rosenthal A."/>
        </authorList>
    </citation>
    <scope>NUCLEOTIDE SEQUENCE [GENOMIC DNA] OF 75-481</scope>
</reference>
<reference key="4">
    <citation type="journal article" date="2009" name="Science">
        <title>Lysine acetylation targets protein complexes and co-regulates major cellular functions.</title>
        <authorList>
            <person name="Choudhary C."/>
            <person name="Kumar C."/>
            <person name="Gnad F."/>
            <person name="Nielsen M.L."/>
            <person name="Rehman M."/>
            <person name="Walther T.C."/>
            <person name="Olsen J.V."/>
            <person name="Mann M."/>
        </authorList>
    </citation>
    <scope>ACETYLATION [LARGE SCALE ANALYSIS] AT LYS-173</scope>
    <scope>IDENTIFICATION BY MASS SPECTROMETRY [LARGE SCALE ANALYSIS]</scope>
</reference>
<reference key="5">
    <citation type="journal article" date="2011" name="BMC Syst. Biol.">
        <title>Initial characterization of the human central proteome.</title>
        <authorList>
            <person name="Burkard T.R."/>
            <person name="Planyavsky M."/>
            <person name="Kaupe I."/>
            <person name="Breitwieser F.P."/>
            <person name="Buerckstuemmer T."/>
            <person name="Bennett K.L."/>
            <person name="Superti-Furga G."/>
            <person name="Colinge J."/>
        </authorList>
    </citation>
    <scope>IDENTIFICATION BY MASS SPECTROMETRY [LARGE SCALE ANALYSIS]</scope>
</reference>
<name>AGFG2_HUMAN</name>
<accession>O95081</accession>
<accession>O75429</accession>
<accession>Q96AB9</accession>
<accession>Q96GL4</accession>
<feature type="chain" id="PRO_0000204828" description="Arf-GAP domain and FG repeat-containing protein 2">
    <location>
        <begin position="1"/>
        <end position="481"/>
    </location>
</feature>
<feature type="domain" description="Arf-GAP" evidence="2">
    <location>
        <begin position="27"/>
        <end position="153"/>
    </location>
</feature>
<feature type="zinc finger region" description="C4-type" evidence="2">
    <location>
        <begin position="47"/>
        <end position="70"/>
    </location>
</feature>
<feature type="region of interest" description="Disordered" evidence="3">
    <location>
        <begin position="150"/>
        <end position="220"/>
    </location>
</feature>
<feature type="region of interest" description="Disordered" evidence="3">
    <location>
        <begin position="271"/>
        <end position="309"/>
    </location>
</feature>
<feature type="region of interest" description="Disordered" evidence="3">
    <location>
        <begin position="431"/>
        <end position="481"/>
    </location>
</feature>
<feature type="compositionally biased region" description="Polar residues" evidence="3">
    <location>
        <begin position="157"/>
        <end position="166"/>
    </location>
</feature>
<feature type="compositionally biased region" description="Polar residues" evidence="3">
    <location>
        <begin position="188"/>
        <end position="210"/>
    </location>
</feature>
<feature type="compositionally biased region" description="Polar residues" evidence="3">
    <location>
        <begin position="283"/>
        <end position="298"/>
    </location>
</feature>
<feature type="compositionally biased region" description="Polar residues" evidence="3">
    <location>
        <begin position="454"/>
        <end position="481"/>
    </location>
</feature>
<feature type="modified residue" description="N6-acetyllysine" evidence="6">
    <location>
        <position position="173"/>
    </location>
</feature>
<feature type="splice variant" id="VSP_010667" description="In isoform 2." evidence="4">
    <original>YVPPDQVKGPT</original>
    <variation>PDTFPRRLCQL</variation>
    <location>
        <begin position="145"/>
        <end position="155"/>
    </location>
</feature>
<feature type="splice variant" id="VSP_010668" description="In isoform 2." evidence="4">
    <location>
        <begin position="157"/>
        <end position="481"/>
    </location>
</feature>
<feature type="sequence variant" id="VAR_050566" description="In dbSNP:rs34731997.">
    <original>T</original>
    <variation>N</variation>
    <location>
        <position position="365"/>
    </location>
</feature>
<feature type="sequence conflict" description="In Ref. 1; AAD01550." evidence="5" ref="1">
    <original>V</original>
    <variation>L</variation>
    <location>
        <position position="96"/>
    </location>
</feature>
<feature type="sequence conflict" description="In Ref. 1; AAD01550." evidence="5" ref="1">
    <original>D</original>
    <variation>N</variation>
    <location>
        <position position="124"/>
    </location>
</feature>
<feature type="sequence conflict" description="In Ref. 3; AAC78803." evidence="5" ref="3">
    <original>Q</original>
    <variation>H</variation>
    <location>
        <position position="206"/>
    </location>
</feature>
<feature type="sequence conflict" description="In Ref. 2; AAH17329." evidence="5" ref="2">
    <original>M</original>
    <variation>T</variation>
    <location>
        <position position="349"/>
    </location>
</feature>
<proteinExistence type="evidence at protein level"/>
<sequence>MVMAAKKGPGPGGGVSGGKAEAEAASEVWCRRVRELGGCSQAGNRHCFECAQRGVTYVDITVGSFVCTTCSGLLRGLNPPHRVKSISMTTFTEPEVVFLQSRGNEVCRKIWLGLFDARTSLVPDSRDPQKVKEFLQEKYEKKRWYVPPDQVKGPTYTKGSASTPVQGSIPEGKPLRTLLGDPAPSLSVAASTSSQPVSQSHARTSQARSTQPPPHSSVKKASTDLLADIGGDPFAAPQMAPAFAAFPAFGGQTPSQGGFANFDAFSSGPSSSVFGSLPPAGQASFQAQPTPAGSSQGTPFGATPLAPASQPNSLADVGSFLGPGVPAAGVPSSLFGMAGQVPPLQSVTMGGGGGSSTGLAFGAFTNPFTAPAAQSPLPSTNPFQPNGLAPGPGFGMSSAGPGFPQAVPPTGAFASSFPAPLFPPQTPLVQQQNGSSFGDLGSAKLGQRPLSQPAGISTNPFMTGPSSSPFASKPPTTNPFL</sequence>
<gene>
    <name type="primary">AGFG2</name>
    <name type="synonym">HRBL</name>
    <name type="synonym">RABR</name>
</gene>
<comment type="subunit">
    <text evidence="1">Interacts with EPS15R.</text>
</comment>
<comment type="alternative products">
    <event type="alternative splicing"/>
    <isoform>
        <id>O95081-1</id>
        <name>1</name>
        <sequence type="displayed"/>
    </isoform>
    <isoform>
        <id>O95081-2</id>
        <name>2</name>
        <sequence type="described" ref="VSP_010667 VSP_010668"/>
    </isoform>
</comment>
<comment type="domain">
    <text>Contains FG repeats and 4 N-P-F repeats.</text>
</comment>
<comment type="sequence caution" evidence="5">
    <conflict type="erroneous gene model prediction">
        <sequence resource="EMBL-CDS" id="AAC78803"/>
    </conflict>
</comment>
<dbReference type="EMBL" id="AF015042">
    <property type="protein sequence ID" value="AAD01550.1"/>
    <property type="molecule type" value="mRNA"/>
</dbReference>
<dbReference type="EMBL" id="BC009393">
    <property type="protein sequence ID" value="AAH09393.1"/>
    <property type="molecule type" value="mRNA"/>
</dbReference>
<dbReference type="EMBL" id="BC017329">
    <property type="protein sequence ID" value="AAH17329.1"/>
    <property type="molecule type" value="mRNA"/>
</dbReference>
<dbReference type="EMBL" id="AF053356">
    <property type="protein sequence ID" value="AAC78803.1"/>
    <property type="status" value="ALT_SEQ"/>
    <property type="molecule type" value="Genomic_DNA"/>
</dbReference>
<dbReference type="CCDS" id="CCDS5697.1">
    <molecule id="O95081-1"/>
</dbReference>
<dbReference type="RefSeq" id="NP_006067.3">
    <molecule id="O95081-1"/>
    <property type="nucleotide sequence ID" value="NM_006076.4"/>
</dbReference>
<dbReference type="SMR" id="O95081"/>
<dbReference type="BioGRID" id="109504">
    <property type="interactions" value="28"/>
</dbReference>
<dbReference type="ELM" id="O95081"/>
<dbReference type="FunCoup" id="O95081">
    <property type="interactions" value="247"/>
</dbReference>
<dbReference type="IntAct" id="O95081">
    <property type="interactions" value="5"/>
</dbReference>
<dbReference type="STRING" id="9606.ENSP00000300176"/>
<dbReference type="GlyCosmos" id="O95081">
    <property type="glycosylation" value="11 sites, 2 glycans"/>
</dbReference>
<dbReference type="GlyGen" id="O95081">
    <property type="glycosylation" value="16 sites, 2 O-linked glycans (14 sites)"/>
</dbReference>
<dbReference type="iPTMnet" id="O95081"/>
<dbReference type="PhosphoSitePlus" id="O95081"/>
<dbReference type="BioMuta" id="AGFG2"/>
<dbReference type="jPOST" id="O95081"/>
<dbReference type="MassIVE" id="O95081"/>
<dbReference type="PaxDb" id="9606-ENSP00000300176"/>
<dbReference type="PeptideAtlas" id="O95081"/>
<dbReference type="ProteomicsDB" id="50647">
    <molecule id="O95081-1"/>
</dbReference>
<dbReference type="ProteomicsDB" id="50648">
    <molecule id="O95081-2"/>
</dbReference>
<dbReference type="Pumba" id="O95081"/>
<dbReference type="Antibodypedia" id="16493">
    <property type="antibodies" value="147 antibodies from 27 providers"/>
</dbReference>
<dbReference type="DNASU" id="3268"/>
<dbReference type="Ensembl" id="ENST00000300176.9">
    <molecule id="O95081-1"/>
    <property type="protein sequence ID" value="ENSP00000300176.4"/>
    <property type="gene ID" value="ENSG00000106351.13"/>
</dbReference>
<dbReference type="GeneID" id="3268"/>
<dbReference type="KEGG" id="hsa:3268"/>
<dbReference type="MANE-Select" id="ENST00000300176.9">
    <property type="protein sequence ID" value="ENSP00000300176.4"/>
    <property type="RefSeq nucleotide sequence ID" value="NM_006076.5"/>
    <property type="RefSeq protein sequence ID" value="NP_006067.3"/>
</dbReference>
<dbReference type="UCSC" id="uc003uvf.4">
    <molecule id="O95081-1"/>
    <property type="organism name" value="human"/>
</dbReference>
<dbReference type="AGR" id="HGNC:5177"/>
<dbReference type="CTD" id="3268"/>
<dbReference type="DisGeNET" id="3268"/>
<dbReference type="GeneCards" id="AGFG2"/>
<dbReference type="HGNC" id="HGNC:5177">
    <property type="gene designation" value="AGFG2"/>
</dbReference>
<dbReference type="HPA" id="ENSG00000106351">
    <property type="expression patterns" value="Tissue enriched (salivary)"/>
</dbReference>
<dbReference type="MIM" id="604019">
    <property type="type" value="gene"/>
</dbReference>
<dbReference type="neXtProt" id="NX_O95081"/>
<dbReference type="OpenTargets" id="ENSG00000106351"/>
<dbReference type="PharmGKB" id="PA29451"/>
<dbReference type="VEuPathDB" id="HostDB:ENSG00000106351"/>
<dbReference type="eggNOG" id="KOG0702">
    <property type="taxonomic scope" value="Eukaryota"/>
</dbReference>
<dbReference type="GeneTree" id="ENSGT00940000161071"/>
<dbReference type="HOGENOM" id="CLU_027801_0_0_1"/>
<dbReference type="InParanoid" id="O95081"/>
<dbReference type="OMA" id="DVFGDIW"/>
<dbReference type="OrthoDB" id="6036at2759"/>
<dbReference type="PAN-GO" id="O95081">
    <property type="GO annotations" value="1 GO annotation based on evolutionary models"/>
</dbReference>
<dbReference type="PhylomeDB" id="O95081"/>
<dbReference type="TreeFam" id="TF325357"/>
<dbReference type="PathwayCommons" id="O95081"/>
<dbReference type="SignaLink" id="O95081"/>
<dbReference type="BioGRID-ORCS" id="3268">
    <property type="hits" value="12 hits in 1155 CRISPR screens"/>
</dbReference>
<dbReference type="ChiTaRS" id="AGFG2">
    <property type="organism name" value="human"/>
</dbReference>
<dbReference type="GeneWiki" id="HRBL"/>
<dbReference type="GenomeRNAi" id="3268"/>
<dbReference type="Pharos" id="O95081">
    <property type="development level" value="Tbio"/>
</dbReference>
<dbReference type="PRO" id="PR:O95081"/>
<dbReference type="Proteomes" id="UP000005640">
    <property type="component" value="Chromosome 7"/>
</dbReference>
<dbReference type="RNAct" id="O95081">
    <property type="molecule type" value="protein"/>
</dbReference>
<dbReference type="Bgee" id="ENSG00000106351">
    <property type="expression patterns" value="Expressed in parotid gland and 140 other cell types or tissues"/>
</dbReference>
<dbReference type="ExpressionAtlas" id="O95081">
    <property type="expression patterns" value="baseline and differential"/>
</dbReference>
<dbReference type="GO" id="GO:0005737">
    <property type="term" value="C:cytoplasm"/>
    <property type="evidence" value="ECO:0000318"/>
    <property type="project" value="GO_Central"/>
</dbReference>
<dbReference type="GO" id="GO:0031410">
    <property type="term" value="C:cytoplasmic vesicle"/>
    <property type="evidence" value="ECO:0000318"/>
    <property type="project" value="GO_Central"/>
</dbReference>
<dbReference type="GO" id="GO:0016020">
    <property type="term" value="C:membrane"/>
    <property type="evidence" value="ECO:0007005"/>
    <property type="project" value="UniProtKB"/>
</dbReference>
<dbReference type="GO" id="GO:0005096">
    <property type="term" value="F:GTPase activator activity"/>
    <property type="evidence" value="ECO:0007669"/>
    <property type="project" value="InterPro"/>
</dbReference>
<dbReference type="GO" id="GO:0008270">
    <property type="term" value="F:zinc ion binding"/>
    <property type="evidence" value="ECO:0007669"/>
    <property type="project" value="UniProtKB-KW"/>
</dbReference>
<dbReference type="GO" id="GO:0001675">
    <property type="term" value="P:acrosome assembly"/>
    <property type="evidence" value="ECO:0000318"/>
    <property type="project" value="GO_Central"/>
</dbReference>
<dbReference type="GO" id="GO:0045109">
    <property type="term" value="P:intermediate filament organization"/>
    <property type="evidence" value="ECO:0000318"/>
    <property type="project" value="GO_Central"/>
</dbReference>
<dbReference type="GO" id="GO:0007289">
    <property type="term" value="P:spermatid nucleus differentiation"/>
    <property type="evidence" value="ECO:0000318"/>
    <property type="project" value="GO_Central"/>
</dbReference>
<dbReference type="CDD" id="cd17903">
    <property type="entry name" value="ArfGap_AGFG2"/>
    <property type="match status" value="1"/>
</dbReference>
<dbReference type="FunFam" id="1.10.220.150:FF:000005">
    <property type="entry name" value="Arf-GAP domain and FG repeat-containing protein 1"/>
    <property type="match status" value="1"/>
</dbReference>
<dbReference type="Gene3D" id="1.10.220.150">
    <property type="entry name" value="Arf GTPase activating protein"/>
    <property type="match status" value="1"/>
</dbReference>
<dbReference type="InterPro" id="IPR052248">
    <property type="entry name" value="Arf-GAP_FG-repeat_protein"/>
</dbReference>
<dbReference type="InterPro" id="IPR037278">
    <property type="entry name" value="ARFGAP/RecO"/>
</dbReference>
<dbReference type="InterPro" id="IPR001164">
    <property type="entry name" value="ArfGAP_dom"/>
</dbReference>
<dbReference type="InterPro" id="IPR038508">
    <property type="entry name" value="ArfGAP_dom_sf"/>
</dbReference>
<dbReference type="PANTHER" id="PTHR46134:SF4">
    <property type="entry name" value="ARF-GAP DOMAIN AND FG REPEAT-CONTAINING PROTEIN 2"/>
    <property type="match status" value="1"/>
</dbReference>
<dbReference type="PANTHER" id="PTHR46134">
    <property type="entry name" value="DRONGO, ISOFORM F"/>
    <property type="match status" value="1"/>
</dbReference>
<dbReference type="Pfam" id="PF01412">
    <property type="entry name" value="ArfGap"/>
    <property type="match status" value="1"/>
</dbReference>
<dbReference type="PRINTS" id="PR00405">
    <property type="entry name" value="REVINTRACTNG"/>
</dbReference>
<dbReference type="SMART" id="SM00105">
    <property type="entry name" value="ArfGap"/>
    <property type="match status" value="1"/>
</dbReference>
<dbReference type="SUPFAM" id="SSF57863">
    <property type="entry name" value="ArfGap/RecO-like zinc finger"/>
    <property type="match status" value="1"/>
</dbReference>
<dbReference type="PROSITE" id="PS50115">
    <property type="entry name" value="ARFGAP"/>
    <property type="match status" value="1"/>
</dbReference>
<organism>
    <name type="scientific">Homo sapiens</name>
    <name type="common">Human</name>
    <dbReference type="NCBI Taxonomy" id="9606"/>
    <lineage>
        <taxon>Eukaryota</taxon>
        <taxon>Metazoa</taxon>
        <taxon>Chordata</taxon>
        <taxon>Craniata</taxon>
        <taxon>Vertebrata</taxon>
        <taxon>Euteleostomi</taxon>
        <taxon>Mammalia</taxon>
        <taxon>Eutheria</taxon>
        <taxon>Euarchontoglires</taxon>
        <taxon>Primates</taxon>
        <taxon>Haplorrhini</taxon>
        <taxon>Catarrhini</taxon>
        <taxon>Hominidae</taxon>
        <taxon>Homo</taxon>
    </lineage>
</organism>
<protein>
    <recommendedName>
        <fullName>Arf-GAP domain and FG repeat-containing protein 2</fullName>
    </recommendedName>
    <alternativeName>
        <fullName>HIV-1 Rev-binding protein-like protein</fullName>
    </alternativeName>
    <alternativeName>
        <fullName>Rev/Rex activation domain-binding protein related</fullName>
        <shortName>RAB-R</shortName>
    </alternativeName>
</protein>